<comment type="function">
    <text evidence="1">Aspartyl-tRNA synthetase with relaxed tRNA specificity since it is able to aspartylate not only its cognate tRNA(Asp) but also tRNA(Asn). Reaction proceeds in two steps: L-aspartate is first activated by ATP to form Asp-AMP and then transferred to the acceptor end of tRNA(Asp/Asn).</text>
</comment>
<comment type="catalytic activity">
    <reaction evidence="1">
        <text>tRNA(Asx) + L-aspartate + ATP = L-aspartyl-tRNA(Asx) + AMP + diphosphate</text>
        <dbReference type="Rhea" id="RHEA:18349"/>
        <dbReference type="Rhea" id="RHEA-COMP:9710"/>
        <dbReference type="Rhea" id="RHEA-COMP:9711"/>
        <dbReference type="ChEBI" id="CHEBI:29991"/>
        <dbReference type="ChEBI" id="CHEBI:30616"/>
        <dbReference type="ChEBI" id="CHEBI:33019"/>
        <dbReference type="ChEBI" id="CHEBI:78442"/>
        <dbReference type="ChEBI" id="CHEBI:78516"/>
        <dbReference type="ChEBI" id="CHEBI:456215"/>
        <dbReference type="EC" id="6.1.1.23"/>
    </reaction>
</comment>
<comment type="subunit">
    <text evidence="1">Homodimer.</text>
</comment>
<comment type="subcellular location">
    <subcellularLocation>
        <location evidence="1">Cytoplasm</location>
    </subcellularLocation>
</comment>
<comment type="similarity">
    <text evidence="1">Belongs to the class-II aminoacyl-tRNA synthetase family. Type 1 subfamily.</text>
</comment>
<comment type="sequence caution" evidence="3">
    <conflict type="erroneous initiation">
        <sequence resource="EMBL-CDS" id="CCP45368"/>
    </conflict>
    <text>Extended N-terminus.</text>
</comment>
<feature type="chain" id="PRO_0000110908" description="Aspartate--tRNA(Asp/Asn) ligase">
    <location>
        <begin position="1"/>
        <end position="594"/>
    </location>
</feature>
<feature type="region of interest" description="Aspartate" evidence="1">
    <location>
        <begin position="197"/>
        <end position="200"/>
    </location>
</feature>
<feature type="region of interest" description="Disordered" evidence="2">
    <location>
        <begin position="566"/>
        <end position="594"/>
    </location>
</feature>
<feature type="binding site" evidence="1">
    <location>
        <position position="173"/>
    </location>
    <ligand>
        <name>L-aspartate</name>
        <dbReference type="ChEBI" id="CHEBI:29991"/>
    </ligand>
</feature>
<feature type="binding site" evidence="1">
    <location>
        <begin position="219"/>
        <end position="221"/>
    </location>
    <ligand>
        <name>ATP</name>
        <dbReference type="ChEBI" id="CHEBI:30616"/>
    </ligand>
</feature>
<feature type="binding site" evidence="1">
    <location>
        <position position="219"/>
    </location>
    <ligand>
        <name>L-aspartate</name>
        <dbReference type="ChEBI" id="CHEBI:29991"/>
    </ligand>
</feature>
<feature type="binding site" evidence="1">
    <location>
        <position position="228"/>
    </location>
    <ligand>
        <name>ATP</name>
        <dbReference type="ChEBI" id="CHEBI:30616"/>
    </ligand>
</feature>
<feature type="binding site" evidence="1">
    <location>
        <position position="451"/>
    </location>
    <ligand>
        <name>L-aspartate</name>
        <dbReference type="ChEBI" id="CHEBI:29991"/>
    </ligand>
</feature>
<feature type="binding site" evidence="1">
    <location>
        <position position="485"/>
    </location>
    <ligand>
        <name>ATP</name>
        <dbReference type="ChEBI" id="CHEBI:30616"/>
    </ligand>
</feature>
<feature type="binding site" evidence="1">
    <location>
        <position position="492"/>
    </location>
    <ligand>
        <name>L-aspartate</name>
        <dbReference type="ChEBI" id="CHEBI:29991"/>
    </ligand>
</feature>
<feature type="binding site" evidence="1">
    <location>
        <begin position="537"/>
        <end position="540"/>
    </location>
    <ligand>
        <name>ATP</name>
        <dbReference type="ChEBI" id="CHEBI:30616"/>
    </ligand>
</feature>
<feature type="site" description="Important for tRNA non-discrimination" evidence="1">
    <location>
        <position position="31"/>
    </location>
</feature>
<feature type="site" description="Important for tRNA non-discrimination" evidence="1">
    <location>
        <position position="83"/>
    </location>
</feature>
<feature type="helix" evidence="4">
    <location>
        <begin position="7"/>
        <end position="9"/>
    </location>
</feature>
<feature type="helix" evidence="4">
    <location>
        <begin position="12"/>
        <end position="14"/>
    </location>
</feature>
<feature type="strand" evidence="4">
    <location>
        <begin position="18"/>
        <end position="31"/>
    </location>
</feature>
<feature type="strand" evidence="4">
    <location>
        <begin position="34"/>
        <end position="40"/>
    </location>
</feature>
<feature type="strand" evidence="4">
    <location>
        <begin position="45"/>
        <end position="50"/>
    </location>
</feature>
<feature type="helix" evidence="4">
    <location>
        <begin position="56"/>
        <end position="62"/>
    </location>
</feature>
<feature type="strand" evidence="4">
    <location>
        <begin position="70"/>
        <end position="78"/>
    </location>
</feature>
<feature type="strand" evidence="4">
    <location>
        <begin position="89"/>
        <end position="91"/>
    </location>
</feature>
<feature type="strand" evidence="4">
    <location>
        <begin position="95"/>
        <end position="97"/>
    </location>
</feature>
<feature type="strand" evidence="4">
    <location>
        <begin position="99"/>
        <end position="105"/>
    </location>
</feature>
<feature type="strand" evidence="4">
    <location>
        <begin position="114"/>
        <end position="116"/>
    </location>
</feature>
<feature type="helix" evidence="4">
    <location>
        <begin position="120"/>
        <end position="125"/>
    </location>
</feature>
<feature type="helix" evidence="4">
    <location>
        <begin position="127"/>
        <end position="130"/>
    </location>
</feature>
<feature type="helix" evidence="4">
    <location>
        <begin position="134"/>
        <end position="156"/>
    </location>
</feature>
<feature type="strand" evidence="4">
    <location>
        <begin position="166"/>
        <end position="168"/>
    </location>
</feature>
<feature type="strand" evidence="4">
    <location>
        <begin position="173"/>
        <end position="176"/>
    </location>
</feature>
<feature type="strand" evidence="4">
    <location>
        <begin position="178"/>
        <end position="181"/>
    </location>
</feature>
<feature type="strand" evidence="4">
    <location>
        <begin position="189"/>
        <end position="192"/>
    </location>
</feature>
<feature type="helix" evidence="4">
    <location>
        <begin position="197"/>
        <end position="205"/>
    </location>
</feature>
<feature type="strand" evidence="4">
    <location>
        <begin position="210"/>
        <end position="218"/>
    </location>
</feature>
<feature type="strand" evidence="4">
    <location>
        <begin position="229"/>
        <end position="240"/>
    </location>
</feature>
<feature type="helix" evidence="4">
    <location>
        <begin position="243"/>
        <end position="258"/>
    </location>
</feature>
<feature type="turn" evidence="4">
    <location>
        <begin position="259"/>
        <end position="262"/>
    </location>
</feature>
<feature type="strand" evidence="4">
    <location>
        <begin position="271"/>
        <end position="273"/>
    </location>
</feature>
<feature type="helix" evidence="4">
    <location>
        <begin position="274"/>
        <end position="281"/>
    </location>
</feature>
<feature type="strand" evidence="4">
    <location>
        <begin position="282"/>
        <end position="285"/>
    </location>
</feature>
<feature type="turn" evidence="4">
    <location>
        <begin position="298"/>
        <end position="301"/>
    </location>
</feature>
<feature type="helix" evidence="4">
    <location>
        <begin position="307"/>
        <end position="309"/>
    </location>
</feature>
<feature type="strand" evidence="4">
    <location>
        <begin position="314"/>
        <end position="319"/>
    </location>
</feature>
<feature type="helix" evidence="4">
    <location>
        <begin position="322"/>
        <end position="324"/>
    </location>
</feature>
<feature type="helix" evidence="4">
    <location>
        <begin position="327"/>
        <end position="338"/>
    </location>
</feature>
<feature type="turn" evidence="4">
    <location>
        <begin position="339"/>
        <end position="341"/>
    </location>
</feature>
<feature type="strand" evidence="4">
    <location>
        <begin position="346"/>
        <end position="350"/>
    </location>
</feature>
<feature type="strand" evidence="4">
    <location>
        <begin position="356"/>
        <end position="358"/>
    </location>
</feature>
<feature type="helix" evidence="4">
    <location>
        <begin position="361"/>
        <end position="363"/>
    </location>
</feature>
<feature type="helix" evidence="4">
    <location>
        <begin position="367"/>
        <end position="375"/>
    </location>
</feature>
<feature type="strand" evidence="4">
    <location>
        <begin position="383"/>
        <end position="390"/>
    </location>
</feature>
<feature type="helix" evidence="4">
    <location>
        <begin position="391"/>
        <end position="408"/>
    </location>
</feature>
<feature type="strand" evidence="4">
    <location>
        <begin position="419"/>
        <end position="424"/>
    </location>
</feature>
<feature type="strand" evidence="4">
    <location>
        <begin position="426"/>
        <end position="430"/>
    </location>
</feature>
<feature type="helix" evidence="4">
    <location>
        <begin position="431"/>
        <end position="436"/>
    </location>
</feature>
<feature type="strand" evidence="4">
    <location>
        <begin position="442"/>
        <end position="451"/>
    </location>
</feature>
<feature type="turn" evidence="4">
    <location>
        <begin position="459"/>
        <end position="461"/>
    </location>
</feature>
<feature type="helix" evidence="4">
    <location>
        <begin position="462"/>
        <end position="464"/>
    </location>
</feature>
<feature type="strand" evidence="4">
    <location>
        <begin position="465"/>
        <end position="469"/>
    </location>
</feature>
<feature type="strand" evidence="4">
    <location>
        <begin position="473"/>
        <end position="481"/>
    </location>
</feature>
<feature type="strand" evidence="4">
    <location>
        <begin position="484"/>
        <end position="492"/>
    </location>
</feature>
<feature type="helix" evidence="4">
    <location>
        <begin position="496"/>
        <end position="505"/>
    </location>
</feature>
<feature type="helix" evidence="4">
    <location>
        <begin position="510"/>
        <end position="523"/>
    </location>
</feature>
<feature type="strand" evidence="4">
    <location>
        <begin position="531"/>
        <end position="537"/>
    </location>
</feature>
<feature type="helix" evidence="4">
    <location>
        <begin position="538"/>
        <end position="546"/>
    </location>
</feature>
<feature type="helix" evidence="4">
    <location>
        <begin position="551"/>
        <end position="554"/>
    </location>
</feature>
<feature type="strand" evidence="4">
    <location>
        <begin position="555"/>
        <end position="557"/>
    </location>
</feature>
<feature type="turn" evidence="4">
    <location>
        <begin position="566"/>
        <end position="569"/>
    </location>
</feature>
<feature type="strand" evidence="4">
    <location>
        <begin position="570"/>
        <end position="572"/>
    </location>
</feature>
<feature type="helix" evidence="4">
    <location>
        <begin position="576"/>
        <end position="580"/>
    </location>
</feature>
<organism>
    <name type="scientific">Mycobacterium tuberculosis (strain ATCC 25618 / H37Rv)</name>
    <dbReference type="NCBI Taxonomy" id="83332"/>
    <lineage>
        <taxon>Bacteria</taxon>
        <taxon>Bacillati</taxon>
        <taxon>Actinomycetota</taxon>
        <taxon>Actinomycetes</taxon>
        <taxon>Mycobacteriales</taxon>
        <taxon>Mycobacteriaceae</taxon>
        <taxon>Mycobacterium</taxon>
        <taxon>Mycobacterium tuberculosis complex</taxon>
    </lineage>
</organism>
<name>SYDND_MYCTU</name>
<keyword id="KW-0002">3D-structure</keyword>
<keyword id="KW-0030">Aminoacyl-tRNA synthetase</keyword>
<keyword id="KW-0067">ATP-binding</keyword>
<keyword id="KW-0963">Cytoplasm</keyword>
<keyword id="KW-0436">Ligase</keyword>
<keyword id="KW-0547">Nucleotide-binding</keyword>
<keyword id="KW-0648">Protein biosynthesis</keyword>
<keyword id="KW-1185">Reference proteome</keyword>
<accession>P9WFW3</accession>
<accession>L0TCT5</accession>
<accession>Q50649</accession>
<protein>
    <recommendedName>
        <fullName evidence="1">Aspartate--tRNA(Asp/Asn) ligase</fullName>
        <ecNumber evidence="1">6.1.1.23</ecNumber>
    </recommendedName>
    <alternativeName>
        <fullName evidence="1">Aspartyl-tRNA synthetase</fullName>
        <shortName evidence="1">AspRS</shortName>
    </alternativeName>
    <alternativeName>
        <fullName evidence="1">Non-discriminating aspartyl-tRNA synthetase</fullName>
        <shortName evidence="1">ND-AspRS</shortName>
    </alternativeName>
</protein>
<gene>
    <name evidence="1" type="primary">aspS</name>
    <name type="ordered locus">Rv2572c</name>
    <name type="ORF">MTCY227.29</name>
</gene>
<sequence length="594" mass="64981">MLRSHAAGLLREGDAGQQVTLAGWVARRRDHGGVIFIDLRDASGIAQVVFRDPQDTEVLAQAHRLRAEFCVSVAGVVEIRPEGNANPEIATGEIEVNATSLTVLGECAPLPFQLDEPAGEELRLKYRYLDLRRDDPAAAIRLRSRVNAAARAVLARHDFVEIETPTITRSTPEGARDFLVPARLHPGSFYALPQSPQLFKQLLMVAGMERYYQIARCYRDEDFRADRQPEFTQLDMEMSFVDAEDIIAISEEVLTELWALIGYRIPTPIPRIGYAEAMRRFGTDKPDLRFGLELVECTDFFSDTTFRVFQAPYVGAVVMPGGASQPRRTLDGWQDWAKQRGHRGLAYVLVAEDGTLGGPVAKNLTEAERTGLADHVGAKPGDCIFFSAGPVKSSRALLGAARVEIANRLGLIDPDAWAFVWVVDPPLFEPADEATAAGEVAVGSGAWTAVHHAFTAPKPEWEDRIESDTGSVLADAYDIVCNGHEIGGGSVRIHRRDIQERVFAVMGLDKAEAEEKFGFLLEAFMFGAPPHGGIAFGWDRTTALLAGMDSIREVIAFPKTGGGVDPLTDAPAPITAQQRKESGIDAQPKRVQQA</sequence>
<proteinExistence type="evidence at protein level"/>
<reference key="1">
    <citation type="journal article" date="1998" name="Nature">
        <title>Deciphering the biology of Mycobacterium tuberculosis from the complete genome sequence.</title>
        <authorList>
            <person name="Cole S.T."/>
            <person name="Brosch R."/>
            <person name="Parkhill J."/>
            <person name="Garnier T."/>
            <person name="Churcher C.M."/>
            <person name="Harris D.E."/>
            <person name="Gordon S.V."/>
            <person name="Eiglmeier K."/>
            <person name="Gas S."/>
            <person name="Barry C.E. III"/>
            <person name="Tekaia F."/>
            <person name="Badcock K."/>
            <person name="Basham D."/>
            <person name="Brown D."/>
            <person name="Chillingworth T."/>
            <person name="Connor R."/>
            <person name="Davies R.M."/>
            <person name="Devlin K."/>
            <person name="Feltwell T."/>
            <person name="Gentles S."/>
            <person name="Hamlin N."/>
            <person name="Holroyd S."/>
            <person name="Hornsby T."/>
            <person name="Jagels K."/>
            <person name="Krogh A."/>
            <person name="McLean J."/>
            <person name="Moule S."/>
            <person name="Murphy L.D."/>
            <person name="Oliver S."/>
            <person name="Osborne J."/>
            <person name="Quail M.A."/>
            <person name="Rajandream M.A."/>
            <person name="Rogers J."/>
            <person name="Rutter S."/>
            <person name="Seeger K."/>
            <person name="Skelton S."/>
            <person name="Squares S."/>
            <person name="Squares R."/>
            <person name="Sulston J.E."/>
            <person name="Taylor K."/>
            <person name="Whitehead S."/>
            <person name="Barrell B.G."/>
        </authorList>
    </citation>
    <scope>NUCLEOTIDE SEQUENCE [LARGE SCALE GENOMIC DNA]</scope>
    <source>
        <strain>ATCC 25618 / H37Rv</strain>
    </source>
</reference>
<reference key="2">
    <citation type="journal article" date="2011" name="Mol. Cell. Proteomics">
        <title>Proteogenomic analysis of Mycobacterium tuberculosis by high resolution mass spectrometry.</title>
        <authorList>
            <person name="Kelkar D.S."/>
            <person name="Kumar D."/>
            <person name="Kumar P."/>
            <person name="Balakrishnan L."/>
            <person name="Muthusamy B."/>
            <person name="Yadav A.K."/>
            <person name="Shrivastava P."/>
            <person name="Marimuthu A."/>
            <person name="Anand S."/>
            <person name="Sundaram H."/>
            <person name="Kingsbury R."/>
            <person name="Harsha H.C."/>
            <person name="Nair B."/>
            <person name="Prasad T.S."/>
            <person name="Chauhan D.S."/>
            <person name="Katoch K."/>
            <person name="Katoch V.M."/>
            <person name="Kumar P."/>
            <person name="Chaerkady R."/>
            <person name="Ramachandran S."/>
            <person name="Dash D."/>
            <person name="Pandey A."/>
        </authorList>
    </citation>
    <scope>IDENTIFICATION BY MASS SPECTROMETRY [LARGE SCALE ANALYSIS]</scope>
    <source>
        <strain>ATCC 25618 / H37Rv</strain>
    </source>
</reference>
<evidence type="ECO:0000255" key="1">
    <source>
        <dbReference type="HAMAP-Rule" id="MF_00044"/>
    </source>
</evidence>
<evidence type="ECO:0000256" key="2">
    <source>
        <dbReference type="SAM" id="MobiDB-lite"/>
    </source>
</evidence>
<evidence type="ECO:0000305" key="3"/>
<evidence type="ECO:0007829" key="4">
    <source>
        <dbReference type="PDB" id="5W25"/>
    </source>
</evidence>
<dbReference type="EC" id="6.1.1.23" evidence="1"/>
<dbReference type="EMBL" id="AL123456">
    <property type="protein sequence ID" value="CCP45368.1"/>
    <property type="status" value="ALT_INIT"/>
    <property type="molecule type" value="Genomic_DNA"/>
</dbReference>
<dbReference type="PIR" id="C70724">
    <property type="entry name" value="C70724"/>
</dbReference>
<dbReference type="RefSeq" id="NP_217088.1">
    <property type="nucleotide sequence ID" value="NC_000962.3"/>
</dbReference>
<dbReference type="PDB" id="5W25">
    <property type="method" value="X-ray"/>
    <property type="resolution" value="2.65 A"/>
    <property type="chains" value="A/B=2-594"/>
</dbReference>
<dbReference type="PDBsum" id="5W25"/>
<dbReference type="SMR" id="P9WFW3"/>
<dbReference type="FunCoup" id="P9WFW3">
    <property type="interactions" value="488"/>
</dbReference>
<dbReference type="STRING" id="83332.Rv2572c"/>
<dbReference type="ChEMBL" id="CHEMBL4662921"/>
<dbReference type="PaxDb" id="83332-Rv2572c"/>
<dbReference type="DNASU" id="888532"/>
<dbReference type="GeneID" id="888532"/>
<dbReference type="KEGG" id="mtu:Rv2572c"/>
<dbReference type="TubercuList" id="Rv2572c"/>
<dbReference type="eggNOG" id="COG0173">
    <property type="taxonomic scope" value="Bacteria"/>
</dbReference>
<dbReference type="InParanoid" id="P9WFW3"/>
<dbReference type="OrthoDB" id="9802326at2"/>
<dbReference type="BRENDA" id="6.1.1.12">
    <property type="organism ID" value="3445"/>
</dbReference>
<dbReference type="Proteomes" id="UP000001584">
    <property type="component" value="Chromosome"/>
</dbReference>
<dbReference type="GO" id="GO:0005737">
    <property type="term" value="C:cytoplasm"/>
    <property type="evidence" value="ECO:0007669"/>
    <property type="project" value="UniProtKB-SubCell"/>
</dbReference>
<dbReference type="GO" id="GO:0009274">
    <property type="term" value="C:peptidoglycan-based cell wall"/>
    <property type="evidence" value="ECO:0007005"/>
    <property type="project" value="MTBBASE"/>
</dbReference>
<dbReference type="GO" id="GO:0004815">
    <property type="term" value="F:aspartate-tRNA ligase activity"/>
    <property type="evidence" value="ECO:0000318"/>
    <property type="project" value="GO_Central"/>
</dbReference>
<dbReference type="GO" id="GO:0050560">
    <property type="term" value="F:aspartate-tRNA(Asn) ligase activity"/>
    <property type="evidence" value="ECO:0007669"/>
    <property type="project" value="UniProtKB-EC"/>
</dbReference>
<dbReference type="GO" id="GO:0005524">
    <property type="term" value="F:ATP binding"/>
    <property type="evidence" value="ECO:0007669"/>
    <property type="project" value="UniProtKB-UniRule"/>
</dbReference>
<dbReference type="GO" id="GO:0003676">
    <property type="term" value="F:nucleic acid binding"/>
    <property type="evidence" value="ECO:0007669"/>
    <property type="project" value="InterPro"/>
</dbReference>
<dbReference type="GO" id="GO:0006422">
    <property type="term" value="P:aspartyl-tRNA aminoacylation"/>
    <property type="evidence" value="ECO:0000318"/>
    <property type="project" value="GO_Central"/>
</dbReference>
<dbReference type="CDD" id="cd00777">
    <property type="entry name" value="AspRS_core"/>
    <property type="match status" value="1"/>
</dbReference>
<dbReference type="CDD" id="cd04317">
    <property type="entry name" value="EcAspRS_like_N"/>
    <property type="match status" value="1"/>
</dbReference>
<dbReference type="Gene3D" id="3.30.930.10">
    <property type="entry name" value="Bira Bifunctional Protein, Domain 2"/>
    <property type="match status" value="1"/>
</dbReference>
<dbReference type="Gene3D" id="3.30.1360.30">
    <property type="entry name" value="GAD-like domain"/>
    <property type="match status" value="1"/>
</dbReference>
<dbReference type="Gene3D" id="2.40.50.140">
    <property type="entry name" value="Nucleic acid-binding proteins"/>
    <property type="match status" value="1"/>
</dbReference>
<dbReference type="HAMAP" id="MF_00044">
    <property type="entry name" value="Asp_tRNA_synth_type1"/>
    <property type="match status" value="1"/>
</dbReference>
<dbReference type="InterPro" id="IPR004364">
    <property type="entry name" value="Aa-tRNA-synt_II"/>
</dbReference>
<dbReference type="InterPro" id="IPR006195">
    <property type="entry name" value="aa-tRNA-synth_II"/>
</dbReference>
<dbReference type="InterPro" id="IPR045864">
    <property type="entry name" value="aa-tRNA-synth_II/BPL/LPL"/>
</dbReference>
<dbReference type="InterPro" id="IPR004524">
    <property type="entry name" value="Asp-tRNA-ligase_1"/>
</dbReference>
<dbReference type="InterPro" id="IPR047089">
    <property type="entry name" value="Asp-tRNA-ligase_1_N"/>
</dbReference>
<dbReference type="InterPro" id="IPR002312">
    <property type="entry name" value="Asp/Asn-tRNA-synth_IIb"/>
</dbReference>
<dbReference type="InterPro" id="IPR047090">
    <property type="entry name" value="AspRS_core"/>
</dbReference>
<dbReference type="InterPro" id="IPR004115">
    <property type="entry name" value="GAD-like_sf"/>
</dbReference>
<dbReference type="InterPro" id="IPR029351">
    <property type="entry name" value="GAD_dom"/>
</dbReference>
<dbReference type="InterPro" id="IPR012340">
    <property type="entry name" value="NA-bd_OB-fold"/>
</dbReference>
<dbReference type="InterPro" id="IPR004365">
    <property type="entry name" value="NA-bd_OB_tRNA"/>
</dbReference>
<dbReference type="NCBIfam" id="TIGR00459">
    <property type="entry name" value="aspS_bact"/>
    <property type="match status" value="1"/>
</dbReference>
<dbReference type="NCBIfam" id="NF001750">
    <property type="entry name" value="PRK00476.1"/>
    <property type="match status" value="1"/>
</dbReference>
<dbReference type="PANTHER" id="PTHR22594:SF5">
    <property type="entry name" value="ASPARTATE--TRNA LIGASE, MITOCHONDRIAL"/>
    <property type="match status" value="1"/>
</dbReference>
<dbReference type="PANTHER" id="PTHR22594">
    <property type="entry name" value="ASPARTYL/LYSYL-TRNA SYNTHETASE"/>
    <property type="match status" value="1"/>
</dbReference>
<dbReference type="Pfam" id="PF02938">
    <property type="entry name" value="GAD"/>
    <property type="match status" value="1"/>
</dbReference>
<dbReference type="Pfam" id="PF00152">
    <property type="entry name" value="tRNA-synt_2"/>
    <property type="match status" value="1"/>
</dbReference>
<dbReference type="Pfam" id="PF01336">
    <property type="entry name" value="tRNA_anti-codon"/>
    <property type="match status" value="1"/>
</dbReference>
<dbReference type="PRINTS" id="PR01042">
    <property type="entry name" value="TRNASYNTHASP"/>
</dbReference>
<dbReference type="SUPFAM" id="SSF55681">
    <property type="entry name" value="Class II aaRS and biotin synthetases"/>
    <property type="match status" value="1"/>
</dbReference>
<dbReference type="SUPFAM" id="SSF55261">
    <property type="entry name" value="GAD domain-like"/>
    <property type="match status" value="1"/>
</dbReference>
<dbReference type="SUPFAM" id="SSF50249">
    <property type="entry name" value="Nucleic acid-binding proteins"/>
    <property type="match status" value="1"/>
</dbReference>
<dbReference type="PROSITE" id="PS50862">
    <property type="entry name" value="AA_TRNA_LIGASE_II"/>
    <property type="match status" value="1"/>
</dbReference>